<feature type="chain" id="PRO_1000065663" description="Undecaprenyl-phosphate 4-deoxy-4-formamido-L-arabinose transferase">
    <location>
        <begin position="1"/>
        <end position="327"/>
    </location>
</feature>
<feature type="transmembrane region" description="Helical" evidence="1">
    <location>
        <begin position="235"/>
        <end position="255"/>
    </location>
</feature>
<feature type="transmembrane region" description="Helical" evidence="1">
    <location>
        <begin position="270"/>
        <end position="290"/>
    </location>
</feature>
<name>ARNC_YERPN</name>
<evidence type="ECO:0000255" key="1">
    <source>
        <dbReference type="HAMAP-Rule" id="MF_01164"/>
    </source>
</evidence>
<proteinExistence type="inferred from homology"/>
<reference key="1">
    <citation type="journal article" date="2006" name="J. Bacteriol.">
        <title>Complete genome sequence of Yersinia pestis strains Antiqua and Nepal516: evidence of gene reduction in an emerging pathogen.</title>
        <authorList>
            <person name="Chain P.S.G."/>
            <person name="Hu P."/>
            <person name="Malfatti S.A."/>
            <person name="Radnedge L."/>
            <person name="Larimer F."/>
            <person name="Vergez L.M."/>
            <person name="Worsham P."/>
            <person name="Chu M.C."/>
            <person name="Andersen G.L."/>
        </authorList>
    </citation>
    <scope>NUCLEOTIDE SEQUENCE [LARGE SCALE GENOMIC DNA]</scope>
    <source>
        <strain>Nepal516</strain>
    </source>
</reference>
<reference key="2">
    <citation type="submission" date="2009-04" db="EMBL/GenBank/DDBJ databases">
        <title>Yersinia pestis Nepal516A whole genome shotgun sequencing project.</title>
        <authorList>
            <person name="Plunkett G. III"/>
            <person name="Anderson B.D."/>
            <person name="Baumler D.J."/>
            <person name="Burland V."/>
            <person name="Cabot E.L."/>
            <person name="Glasner J.D."/>
            <person name="Mau B."/>
            <person name="Neeno-Eckwall E."/>
            <person name="Perna N.T."/>
            <person name="Munk A.C."/>
            <person name="Tapia R."/>
            <person name="Green L.D."/>
            <person name="Rogers Y.C."/>
            <person name="Detter J.C."/>
            <person name="Bruce D.C."/>
            <person name="Brettin T.S."/>
        </authorList>
    </citation>
    <scope>NUCLEOTIDE SEQUENCE [LARGE SCALE GENOMIC DNA]</scope>
    <source>
        <strain>Nepal516</strain>
    </source>
</reference>
<keyword id="KW-0046">Antibiotic resistance</keyword>
<keyword id="KW-0997">Cell inner membrane</keyword>
<keyword id="KW-1003">Cell membrane</keyword>
<keyword id="KW-0328">Glycosyltransferase</keyword>
<keyword id="KW-0441">Lipid A biosynthesis</keyword>
<keyword id="KW-0444">Lipid biosynthesis</keyword>
<keyword id="KW-0443">Lipid metabolism</keyword>
<keyword id="KW-0448">Lipopolysaccharide biosynthesis</keyword>
<keyword id="KW-0472">Membrane</keyword>
<keyword id="KW-0808">Transferase</keyword>
<keyword id="KW-0812">Transmembrane</keyword>
<keyword id="KW-1133">Transmembrane helix</keyword>
<protein>
    <recommendedName>
        <fullName evidence="1">Undecaprenyl-phosphate 4-deoxy-4-formamido-L-arabinose transferase</fullName>
        <ecNumber evidence="1">2.4.2.53</ecNumber>
    </recommendedName>
    <alternativeName>
        <fullName evidence="1">Undecaprenyl-phosphate Ara4FN transferase</fullName>
        <shortName evidence="1">Ara4FN transferase</shortName>
    </alternativeName>
</protein>
<organism>
    <name type="scientific">Yersinia pestis bv. Antiqua (strain Nepal516)</name>
    <dbReference type="NCBI Taxonomy" id="377628"/>
    <lineage>
        <taxon>Bacteria</taxon>
        <taxon>Pseudomonadati</taxon>
        <taxon>Pseudomonadota</taxon>
        <taxon>Gammaproteobacteria</taxon>
        <taxon>Enterobacterales</taxon>
        <taxon>Yersiniaceae</taxon>
        <taxon>Yersinia</taxon>
    </lineage>
</organism>
<comment type="function">
    <text evidence="1">Catalyzes the transfer of 4-deoxy-4-formamido-L-arabinose from UDP to undecaprenyl phosphate. The modified arabinose is attached to lipid A and is required for resistance to polymyxin and cationic antimicrobial peptides.</text>
</comment>
<comment type="catalytic activity">
    <reaction evidence="1">
        <text>UDP-4-deoxy-4-formamido-beta-L-arabinose + di-trans,octa-cis-undecaprenyl phosphate = 4-deoxy-4-formamido-alpha-L-arabinopyranosyl di-trans,octa-cis-undecaprenyl phosphate + UDP</text>
        <dbReference type="Rhea" id="RHEA:27722"/>
        <dbReference type="ChEBI" id="CHEBI:58223"/>
        <dbReference type="ChEBI" id="CHEBI:58709"/>
        <dbReference type="ChEBI" id="CHEBI:58909"/>
        <dbReference type="ChEBI" id="CHEBI:60392"/>
        <dbReference type="EC" id="2.4.2.53"/>
    </reaction>
</comment>
<comment type="pathway">
    <text evidence="1">Glycolipid biosynthesis; 4-amino-4-deoxy-alpha-L-arabinose undecaprenyl phosphate biosynthesis; 4-amino-4-deoxy-alpha-L-arabinose undecaprenyl phosphate from UDP-4-deoxy-4-formamido-beta-L-arabinose and undecaprenyl phosphate: step 1/2.</text>
</comment>
<comment type="pathway">
    <text evidence="1">Bacterial outer membrane biogenesis; lipopolysaccharide biosynthesis.</text>
</comment>
<comment type="subcellular location">
    <subcellularLocation>
        <location evidence="1">Cell inner membrane</location>
        <topology evidence="1">Multi-pass membrane protein</topology>
    </subcellularLocation>
</comment>
<comment type="similarity">
    <text evidence="1">Belongs to the glycosyltransferase 2 family.</text>
</comment>
<gene>
    <name evidence="1" type="primary">arnC</name>
    <name type="ordered locus">YPN_1875</name>
    <name type="ORF">YP516_2086</name>
</gene>
<accession>Q1CIH6</accession>
<accession>C4GTH8</accession>
<sequence length="327" mass="36421">MSLNEPIKKVSIVIPVYNEQESLPALIDRTTAACKLLTQAYEIILVDDGSSDNSTELLTAAANDPDSHIIAILLNRNYGQHSAIMAGFNQVSGDLIITLDADLQNPPEETPRLVHVAEEGYDVVGTVRANRQDSLFRKTASRMINMMIQRATGKSMGDYGCMLRAYRRHIVEAMLHCHERSTFIPILANTFARRTTEITVHHAEREFGNSKYSLMRLINLMYDLITCLTTTPLRLLSLVGSAIALLGFTFSVLLVALRLIFGPEWAGGGVFTLFAVLFMFIGAQFVGMGLLGEYIGRIYNDVRARPRYFVQKVVGAEQTENNQDVEK</sequence>
<dbReference type="EC" id="2.4.2.53" evidence="1"/>
<dbReference type="EMBL" id="CP000305">
    <property type="protein sequence ID" value="ABG18204.1"/>
    <property type="molecule type" value="Genomic_DNA"/>
</dbReference>
<dbReference type="EMBL" id="ACNQ01000010">
    <property type="protein sequence ID" value="EEO76779.1"/>
    <property type="molecule type" value="Genomic_DNA"/>
</dbReference>
<dbReference type="RefSeq" id="WP_002211824.1">
    <property type="nucleotide sequence ID" value="NZ_ACNQ01000010.1"/>
</dbReference>
<dbReference type="SMR" id="Q1CIH6"/>
<dbReference type="CAZy" id="GT2">
    <property type="family name" value="Glycosyltransferase Family 2"/>
</dbReference>
<dbReference type="GeneID" id="57976256"/>
<dbReference type="KEGG" id="ypn:YPN_1875"/>
<dbReference type="HOGENOM" id="CLU_033536_0_0_6"/>
<dbReference type="UniPathway" id="UPA00030"/>
<dbReference type="UniPathway" id="UPA00036">
    <property type="reaction ID" value="UER00495"/>
</dbReference>
<dbReference type="Proteomes" id="UP000008936">
    <property type="component" value="Chromosome"/>
</dbReference>
<dbReference type="GO" id="GO:0005886">
    <property type="term" value="C:plasma membrane"/>
    <property type="evidence" value="ECO:0007669"/>
    <property type="project" value="UniProtKB-SubCell"/>
</dbReference>
<dbReference type="GO" id="GO:0016780">
    <property type="term" value="F:phosphotransferase activity, for other substituted phosphate groups"/>
    <property type="evidence" value="ECO:0007669"/>
    <property type="project" value="UniProtKB-UniRule"/>
</dbReference>
<dbReference type="GO" id="GO:0099621">
    <property type="term" value="F:undecaprenyl-phosphate 4-deoxy-4-formamido-L-arabinose transferase activity"/>
    <property type="evidence" value="ECO:0007669"/>
    <property type="project" value="UniProtKB-EC"/>
</dbReference>
<dbReference type="GO" id="GO:0036108">
    <property type="term" value="P:4-amino-4-deoxy-alpha-L-arabinopyranosyl undecaprenyl phosphate biosynthetic process"/>
    <property type="evidence" value="ECO:0007669"/>
    <property type="project" value="UniProtKB-UniRule"/>
</dbReference>
<dbReference type="GO" id="GO:0009245">
    <property type="term" value="P:lipid A biosynthetic process"/>
    <property type="evidence" value="ECO:0007669"/>
    <property type="project" value="UniProtKB-UniRule"/>
</dbReference>
<dbReference type="GO" id="GO:0009103">
    <property type="term" value="P:lipopolysaccharide biosynthetic process"/>
    <property type="evidence" value="ECO:0007669"/>
    <property type="project" value="UniProtKB-UniRule"/>
</dbReference>
<dbReference type="GO" id="GO:0046677">
    <property type="term" value="P:response to antibiotic"/>
    <property type="evidence" value="ECO:0007669"/>
    <property type="project" value="UniProtKB-KW"/>
</dbReference>
<dbReference type="CDD" id="cd04187">
    <property type="entry name" value="DPM1_like_bac"/>
    <property type="match status" value="1"/>
</dbReference>
<dbReference type="FunFam" id="3.90.550.10:FF:000019">
    <property type="entry name" value="Undecaprenyl-phosphate 4-deoxy-4-formamido-L-arabinose transferase"/>
    <property type="match status" value="1"/>
</dbReference>
<dbReference type="Gene3D" id="3.90.550.10">
    <property type="entry name" value="Spore Coat Polysaccharide Biosynthesis Protein SpsA, Chain A"/>
    <property type="match status" value="1"/>
</dbReference>
<dbReference type="HAMAP" id="MF_01164">
    <property type="entry name" value="ArnC_transfer"/>
    <property type="match status" value="1"/>
</dbReference>
<dbReference type="InterPro" id="IPR022857">
    <property type="entry name" value="ArnC_tfrase"/>
</dbReference>
<dbReference type="InterPro" id="IPR001173">
    <property type="entry name" value="Glyco_trans_2-like"/>
</dbReference>
<dbReference type="InterPro" id="IPR050256">
    <property type="entry name" value="Glycosyltransferase_2"/>
</dbReference>
<dbReference type="InterPro" id="IPR029044">
    <property type="entry name" value="Nucleotide-diphossugar_trans"/>
</dbReference>
<dbReference type="NCBIfam" id="NF007986">
    <property type="entry name" value="PRK10714.1"/>
    <property type="match status" value="1"/>
</dbReference>
<dbReference type="PANTHER" id="PTHR48090:SF3">
    <property type="entry name" value="UNDECAPRENYL-PHOSPHATE 4-DEOXY-4-FORMAMIDO-L-ARABINOSE TRANSFERASE"/>
    <property type="match status" value="1"/>
</dbReference>
<dbReference type="PANTHER" id="PTHR48090">
    <property type="entry name" value="UNDECAPRENYL-PHOSPHATE 4-DEOXY-4-FORMAMIDO-L-ARABINOSE TRANSFERASE-RELATED"/>
    <property type="match status" value="1"/>
</dbReference>
<dbReference type="Pfam" id="PF00535">
    <property type="entry name" value="Glycos_transf_2"/>
    <property type="match status" value="1"/>
</dbReference>
<dbReference type="SUPFAM" id="SSF53448">
    <property type="entry name" value="Nucleotide-diphospho-sugar transferases"/>
    <property type="match status" value="1"/>
</dbReference>